<organism>
    <name type="scientific">Bacillus velezensis (strain DSM 23117 / BGSC 10A6 / LMG 26770 / FZB42)</name>
    <name type="common">Bacillus amyloliquefaciens subsp. plantarum</name>
    <dbReference type="NCBI Taxonomy" id="326423"/>
    <lineage>
        <taxon>Bacteria</taxon>
        <taxon>Bacillati</taxon>
        <taxon>Bacillota</taxon>
        <taxon>Bacilli</taxon>
        <taxon>Bacillales</taxon>
        <taxon>Bacillaceae</taxon>
        <taxon>Bacillus</taxon>
        <taxon>Bacillus amyloliquefaciens group</taxon>
    </lineage>
</organism>
<sequence length="188" mass="21238">MRRSKKERQKLLQQTIKSTPFITDEELAGKFGVSIQTIRLDRLELSIPELRERIKNVAEQTLDDEVKSLSLDEVIGEIIDLELDGQAISILEVRREHVFSRNQIARGHHLFAQANSLAVAVIDDELALTASANIRFTRQVKEGERVVAKAKVTAVEKEKGRTVVEVNSYVGEEVVFSGSFDMYRSKQS</sequence>
<reference key="1">
    <citation type="journal article" date="2007" name="Nat. Biotechnol.">
        <title>Comparative analysis of the complete genome sequence of the plant growth-promoting bacterium Bacillus amyloliquefaciens FZB42.</title>
        <authorList>
            <person name="Chen X.H."/>
            <person name="Koumoutsi A."/>
            <person name="Scholz R."/>
            <person name="Eisenreich A."/>
            <person name="Schneider K."/>
            <person name="Heinemeyer I."/>
            <person name="Morgenstern B."/>
            <person name="Voss B."/>
            <person name="Hess W.R."/>
            <person name="Reva O."/>
            <person name="Junge H."/>
            <person name="Voigt B."/>
            <person name="Jungblut P.R."/>
            <person name="Vater J."/>
            <person name="Suessmuth R."/>
            <person name="Liesegang H."/>
            <person name="Strittmatter A."/>
            <person name="Gottschalk G."/>
            <person name="Borriss R."/>
        </authorList>
    </citation>
    <scope>NUCLEOTIDE SEQUENCE [LARGE SCALE GENOMIC DNA]</scope>
    <source>
        <strain>DSM 23117 / BGSC 10A6 / LMG 26770 / FZB42</strain>
    </source>
</reference>
<feature type="chain" id="PRO_1000070204" description="Transcription factor FapR">
    <location>
        <begin position="1"/>
        <end position="188"/>
    </location>
</feature>
<name>FAPR_BACVZ</name>
<comment type="function">
    <text evidence="1">Transcriptional factor involved in regulation of membrane lipid biosynthesis by repressing genes involved in fatty acid and phospholipid metabolism.</text>
</comment>
<comment type="similarity">
    <text evidence="1">Belongs to the FapR family.</text>
</comment>
<gene>
    <name evidence="1" type="primary">fapR</name>
    <name type="ordered locus">RBAM_015710</name>
</gene>
<dbReference type="EMBL" id="CP000560">
    <property type="protein sequence ID" value="ABS73934.1"/>
    <property type="molecule type" value="Genomic_DNA"/>
</dbReference>
<dbReference type="RefSeq" id="WP_003154320.1">
    <property type="nucleotide sequence ID" value="NC_009725.2"/>
</dbReference>
<dbReference type="SMR" id="A7Z4K8"/>
<dbReference type="GeneID" id="93080704"/>
<dbReference type="KEGG" id="bay:RBAM_015710"/>
<dbReference type="HOGENOM" id="CLU_095708_0_0_9"/>
<dbReference type="Proteomes" id="UP000001120">
    <property type="component" value="Chromosome"/>
</dbReference>
<dbReference type="GO" id="GO:0003677">
    <property type="term" value="F:DNA binding"/>
    <property type="evidence" value="ECO:0007669"/>
    <property type="project" value="UniProtKB-KW"/>
</dbReference>
<dbReference type="GO" id="GO:0003700">
    <property type="term" value="F:DNA-binding transcription factor activity"/>
    <property type="evidence" value="ECO:0007669"/>
    <property type="project" value="UniProtKB-UniRule"/>
</dbReference>
<dbReference type="GO" id="GO:0006633">
    <property type="term" value="P:fatty acid biosynthetic process"/>
    <property type="evidence" value="ECO:0007669"/>
    <property type="project" value="UniProtKB-KW"/>
</dbReference>
<dbReference type="GO" id="GO:0045892">
    <property type="term" value="P:negative regulation of DNA-templated transcription"/>
    <property type="evidence" value="ECO:0007669"/>
    <property type="project" value="UniProtKB-UniRule"/>
</dbReference>
<dbReference type="GO" id="GO:0045717">
    <property type="term" value="P:negative regulation of fatty acid biosynthetic process"/>
    <property type="evidence" value="ECO:0007669"/>
    <property type="project" value="UniProtKB-UniRule"/>
</dbReference>
<dbReference type="CDD" id="cd03440">
    <property type="entry name" value="hot_dog"/>
    <property type="match status" value="1"/>
</dbReference>
<dbReference type="Gene3D" id="3.10.129.10">
    <property type="entry name" value="Hotdog Thioesterase"/>
    <property type="match status" value="1"/>
</dbReference>
<dbReference type="Gene3D" id="1.10.10.10">
    <property type="entry name" value="Winged helix-like DNA-binding domain superfamily/Winged helix DNA-binding domain"/>
    <property type="match status" value="1"/>
</dbReference>
<dbReference type="HAMAP" id="MF_01814">
    <property type="entry name" value="Transcrip_fact_FapR"/>
    <property type="match status" value="1"/>
</dbReference>
<dbReference type="InterPro" id="IPR029069">
    <property type="entry name" value="HotDog_dom_sf"/>
</dbReference>
<dbReference type="InterPro" id="IPR006683">
    <property type="entry name" value="Thioestr_dom"/>
</dbReference>
<dbReference type="InterPro" id="IPR017275">
    <property type="entry name" value="Transcription_factor_FapR"/>
</dbReference>
<dbReference type="InterPro" id="IPR036388">
    <property type="entry name" value="WH-like_DNA-bd_sf"/>
</dbReference>
<dbReference type="NCBIfam" id="NF003359">
    <property type="entry name" value="PRK04424.1"/>
    <property type="match status" value="1"/>
</dbReference>
<dbReference type="Pfam" id="PF03061">
    <property type="entry name" value="4HBT"/>
    <property type="match status" value="1"/>
</dbReference>
<dbReference type="PIRSF" id="PIRSF037733">
    <property type="entry name" value="Transcription_factor_FapR"/>
    <property type="match status" value="1"/>
</dbReference>
<dbReference type="SUPFAM" id="SSF54637">
    <property type="entry name" value="Thioesterase/thiol ester dehydrase-isomerase"/>
    <property type="match status" value="1"/>
</dbReference>
<accession>A7Z4K8</accession>
<evidence type="ECO:0000255" key="1">
    <source>
        <dbReference type="HAMAP-Rule" id="MF_01814"/>
    </source>
</evidence>
<protein>
    <recommendedName>
        <fullName evidence="1">Transcription factor FapR</fullName>
    </recommendedName>
    <alternativeName>
        <fullName evidence="1">Fatty acid and phospholipid biosynthesis regulator</fullName>
    </alternativeName>
</protein>
<keyword id="KW-0238">DNA-binding</keyword>
<keyword id="KW-0275">Fatty acid biosynthesis</keyword>
<keyword id="KW-0276">Fatty acid metabolism</keyword>
<keyword id="KW-0444">Lipid biosynthesis</keyword>
<keyword id="KW-0443">Lipid metabolism</keyword>
<keyword id="KW-0678">Repressor</keyword>
<keyword id="KW-0804">Transcription</keyword>
<keyword id="KW-0805">Transcription regulation</keyword>
<proteinExistence type="inferred from homology"/>